<reference key="1">
    <citation type="journal article" date="2005" name="Science">
        <title>The transcriptional landscape of the mammalian genome.</title>
        <authorList>
            <person name="Carninci P."/>
            <person name="Kasukawa T."/>
            <person name="Katayama S."/>
            <person name="Gough J."/>
            <person name="Frith M.C."/>
            <person name="Maeda N."/>
            <person name="Oyama R."/>
            <person name="Ravasi T."/>
            <person name="Lenhard B."/>
            <person name="Wells C."/>
            <person name="Kodzius R."/>
            <person name="Shimokawa K."/>
            <person name="Bajic V.B."/>
            <person name="Brenner S.E."/>
            <person name="Batalov S."/>
            <person name="Forrest A.R."/>
            <person name="Zavolan M."/>
            <person name="Davis M.J."/>
            <person name="Wilming L.G."/>
            <person name="Aidinis V."/>
            <person name="Allen J.E."/>
            <person name="Ambesi-Impiombato A."/>
            <person name="Apweiler R."/>
            <person name="Aturaliya R.N."/>
            <person name="Bailey T.L."/>
            <person name="Bansal M."/>
            <person name="Baxter L."/>
            <person name="Beisel K.W."/>
            <person name="Bersano T."/>
            <person name="Bono H."/>
            <person name="Chalk A.M."/>
            <person name="Chiu K.P."/>
            <person name="Choudhary V."/>
            <person name="Christoffels A."/>
            <person name="Clutterbuck D.R."/>
            <person name="Crowe M.L."/>
            <person name="Dalla E."/>
            <person name="Dalrymple B.P."/>
            <person name="de Bono B."/>
            <person name="Della Gatta G."/>
            <person name="di Bernardo D."/>
            <person name="Down T."/>
            <person name="Engstrom P."/>
            <person name="Fagiolini M."/>
            <person name="Faulkner G."/>
            <person name="Fletcher C.F."/>
            <person name="Fukushima T."/>
            <person name="Furuno M."/>
            <person name="Futaki S."/>
            <person name="Gariboldi M."/>
            <person name="Georgii-Hemming P."/>
            <person name="Gingeras T.R."/>
            <person name="Gojobori T."/>
            <person name="Green R.E."/>
            <person name="Gustincich S."/>
            <person name="Harbers M."/>
            <person name="Hayashi Y."/>
            <person name="Hensch T.K."/>
            <person name="Hirokawa N."/>
            <person name="Hill D."/>
            <person name="Huminiecki L."/>
            <person name="Iacono M."/>
            <person name="Ikeo K."/>
            <person name="Iwama A."/>
            <person name="Ishikawa T."/>
            <person name="Jakt M."/>
            <person name="Kanapin A."/>
            <person name="Katoh M."/>
            <person name="Kawasawa Y."/>
            <person name="Kelso J."/>
            <person name="Kitamura H."/>
            <person name="Kitano H."/>
            <person name="Kollias G."/>
            <person name="Krishnan S.P."/>
            <person name="Kruger A."/>
            <person name="Kummerfeld S.K."/>
            <person name="Kurochkin I.V."/>
            <person name="Lareau L.F."/>
            <person name="Lazarevic D."/>
            <person name="Lipovich L."/>
            <person name="Liu J."/>
            <person name="Liuni S."/>
            <person name="McWilliam S."/>
            <person name="Madan Babu M."/>
            <person name="Madera M."/>
            <person name="Marchionni L."/>
            <person name="Matsuda H."/>
            <person name="Matsuzawa S."/>
            <person name="Miki H."/>
            <person name="Mignone F."/>
            <person name="Miyake S."/>
            <person name="Morris K."/>
            <person name="Mottagui-Tabar S."/>
            <person name="Mulder N."/>
            <person name="Nakano N."/>
            <person name="Nakauchi H."/>
            <person name="Ng P."/>
            <person name="Nilsson R."/>
            <person name="Nishiguchi S."/>
            <person name="Nishikawa S."/>
            <person name="Nori F."/>
            <person name="Ohara O."/>
            <person name="Okazaki Y."/>
            <person name="Orlando V."/>
            <person name="Pang K.C."/>
            <person name="Pavan W.J."/>
            <person name="Pavesi G."/>
            <person name="Pesole G."/>
            <person name="Petrovsky N."/>
            <person name="Piazza S."/>
            <person name="Reed J."/>
            <person name="Reid J.F."/>
            <person name="Ring B.Z."/>
            <person name="Ringwald M."/>
            <person name="Rost B."/>
            <person name="Ruan Y."/>
            <person name="Salzberg S.L."/>
            <person name="Sandelin A."/>
            <person name="Schneider C."/>
            <person name="Schoenbach C."/>
            <person name="Sekiguchi K."/>
            <person name="Semple C.A."/>
            <person name="Seno S."/>
            <person name="Sessa L."/>
            <person name="Sheng Y."/>
            <person name="Shibata Y."/>
            <person name="Shimada H."/>
            <person name="Shimada K."/>
            <person name="Silva D."/>
            <person name="Sinclair B."/>
            <person name="Sperling S."/>
            <person name="Stupka E."/>
            <person name="Sugiura K."/>
            <person name="Sultana R."/>
            <person name="Takenaka Y."/>
            <person name="Taki K."/>
            <person name="Tammoja K."/>
            <person name="Tan S.L."/>
            <person name="Tang S."/>
            <person name="Taylor M.S."/>
            <person name="Tegner J."/>
            <person name="Teichmann S.A."/>
            <person name="Ueda H.R."/>
            <person name="van Nimwegen E."/>
            <person name="Verardo R."/>
            <person name="Wei C.L."/>
            <person name="Yagi K."/>
            <person name="Yamanishi H."/>
            <person name="Zabarovsky E."/>
            <person name="Zhu S."/>
            <person name="Zimmer A."/>
            <person name="Hide W."/>
            <person name="Bult C."/>
            <person name="Grimmond S.M."/>
            <person name="Teasdale R.D."/>
            <person name="Liu E.T."/>
            <person name="Brusic V."/>
            <person name="Quackenbush J."/>
            <person name="Wahlestedt C."/>
            <person name="Mattick J.S."/>
            <person name="Hume D.A."/>
            <person name="Kai C."/>
            <person name="Sasaki D."/>
            <person name="Tomaru Y."/>
            <person name="Fukuda S."/>
            <person name="Kanamori-Katayama M."/>
            <person name="Suzuki M."/>
            <person name="Aoki J."/>
            <person name="Arakawa T."/>
            <person name="Iida J."/>
            <person name="Imamura K."/>
            <person name="Itoh M."/>
            <person name="Kato T."/>
            <person name="Kawaji H."/>
            <person name="Kawagashira N."/>
            <person name="Kawashima T."/>
            <person name="Kojima M."/>
            <person name="Kondo S."/>
            <person name="Konno H."/>
            <person name="Nakano K."/>
            <person name="Ninomiya N."/>
            <person name="Nishio T."/>
            <person name="Okada M."/>
            <person name="Plessy C."/>
            <person name="Shibata K."/>
            <person name="Shiraki T."/>
            <person name="Suzuki S."/>
            <person name="Tagami M."/>
            <person name="Waki K."/>
            <person name="Watahiki A."/>
            <person name="Okamura-Oho Y."/>
            <person name="Suzuki H."/>
            <person name="Kawai J."/>
            <person name="Hayashizaki Y."/>
        </authorList>
    </citation>
    <scope>NUCLEOTIDE SEQUENCE [LARGE SCALE MRNA] (ISOFORM 2)</scope>
    <source>
        <strain>C57BL/6J</strain>
        <tissue>Embryonic liver</tissue>
        <tissue>Head</tissue>
    </source>
</reference>
<reference key="2">
    <citation type="journal article" date="2009" name="PLoS Biol.">
        <title>Lineage-specific biology revealed by a finished genome assembly of the mouse.</title>
        <authorList>
            <person name="Church D.M."/>
            <person name="Goodstadt L."/>
            <person name="Hillier L.W."/>
            <person name="Zody M.C."/>
            <person name="Goldstein S."/>
            <person name="She X."/>
            <person name="Bult C.J."/>
            <person name="Agarwala R."/>
            <person name="Cherry J.L."/>
            <person name="DiCuccio M."/>
            <person name="Hlavina W."/>
            <person name="Kapustin Y."/>
            <person name="Meric P."/>
            <person name="Maglott D."/>
            <person name="Birtle Z."/>
            <person name="Marques A.C."/>
            <person name="Graves T."/>
            <person name="Zhou S."/>
            <person name="Teague B."/>
            <person name="Potamousis K."/>
            <person name="Churas C."/>
            <person name="Place M."/>
            <person name="Herschleb J."/>
            <person name="Runnheim R."/>
            <person name="Forrest D."/>
            <person name="Amos-Landgraf J."/>
            <person name="Schwartz D.C."/>
            <person name="Cheng Z."/>
            <person name="Lindblad-Toh K."/>
            <person name="Eichler E.E."/>
            <person name="Ponting C.P."/>
        </authorList>
    </citation>
    <scope>NUCLEOTIDE SEQUENCE [LARGE SCALE GENOMIC DNA]</scope>
    <source>
        <strain>C57BL/6J</strain>
    </source>
</reference>
<reference key="3">
    <citation type="journal article" date="2004" name="Genome Res.">
        <title>The status, quality, and expansion of the NIH full-length cDNA project: the Mammalian Gene Collection (MGC).</title>
        <authorList>
            <consortium name="The MGC Project Team"/>
        </authorList>
    </citation>
    <scope>NUCLEOTIDE SEQUENCE [LARGE SCALE MRNA] (ISOFORM 1)</scope>
    <source>
        <strain>C57BL/6J</strain>
        <tissue>Eye</tissue>
    </source>
</reference>
<dbReference type="EMBL" id="AK010998">
    <property type="protein sequence ID" value="BAB27317.1"/>
    <property type="molecule type" value="mRNA"/>
</dbReference>
<dbReference type="EMBL" id="AK014373">
    <property type="protein sequence ID" value="BAB29305.1"/>
    <property type="molecule type" value="mRNA"/>
</dbReference>
<dbReference type="EMBL" id="AL672241">
    <property type="status" value="NOT_ANNOTATED_CDS"/>
    <property type="molecule type" value="Genomic_DNA"/>
</dbReference>
<dbReference type="EMBL" id="BC025103">
    <property type="protein sequence ID" value="AAH25103.1"/>
    <property type="molecule type" value="mRNA"/>
</dbReference>
<dbReference type="CCDS" id="CCDS16419.1">
    <molecule id="Q8R179-2"/>
</dbReference>
<dbReference type="CCDS" id="CCDS79820.1">
    <molecule id="Q8R179-1"/>
</dbReference>
<dbReference type="RefSeq" id="NP_001298045.1">
    <molecule id="Q8R179-1"/>
    <property type="nucleotide sequence ID" value="NM_001311116.2"/>
</dbReference>
<dbReference type="RefSeq" id="NP_001348301.1">
    <molecule id="Q8R179-2"/>
    <property type="nucleotide sequence ID" value="NM_001361372.2"/>
</dbReference>
<dbReference type="RefSeq" id="NP_080267.1">
    <molecule id="Q8R179-2"/>
    <property type="nucleotide sequence ID" value="NM_025991.5"/>
</dbReference>
<dbReference type="RefSeq" id="XP_017174704.1">
    <property type="nucleotide sequence ID" value="XM_017319215.1"/>
</dbReference>
<dbReference type="BMRB" id="Q8R179"/>
<dbReference type="SMR" id="Q8R179"/>
<dbReference type="BioGRID" id="211968">
    <property type="interactions" value="4"/>
</dbReference>
<dbReference type="FunCoup" id="Q8R179">
    <property type="interactions" value="330"/>
</dbReference>
<dbReference type="STRING" id="10090.ENSMUSP00000107089"/>
<dbReference type="GlyGen" id="Q8R179">
    <property type="glycosylation" value="1 site"/>
</dbReference>
<dbReference type="iPTMnet" id="Q8R179"/>
<dbReference type="PhosphoSitePlus" id="Q8R179"/>
<dbReference type="PaxDb" id="10090-ENSMUSP00000088179"/>
<dbReference type="ProteomicsDB" id="263577">
    <molecule id="Q8R179-1"/>
</dbReference>
<dbReference type="ProteomicsDB" id="263578">
    <molecule id="Q8R179-2"/>
</dbReference>
<dbReference type="Pumba" id="Q8R179"/>
<dbReference type="Antibodypedia" id="48313">
    <property type="antibodies" value="86 antibodies from 13 providers"/>
</dbReference>
<dbReference type="DNASU" id="67136"/>
<dbReference type="Ensembl" id="ENSMUST00000090682.4">
    <molecule id="Q8R179-2"/>
    <property type="protein sequence ID" value="ENSMUSP00000088179.4"/>
    <property type="gene ID" value="ENSMUSG00000005505.13"/>
</dbReference>
<dbReference type="Ensembl" id="ENSMUST00000111464.8">
    <molecule id="Q8R179-1"/>
    <property type="protein sequence ID" value="ENSMUSP00000107089.2"/>
    <property type="gene ID" value="ENSMUSG00000005505.13"/>
</dbReference>
<dbReference type="GeneID" id="67136"/>
<dbReference type="KEGG" id="mmu:67136"/>
<dbReference type="UCSC" id="uc008kts.1">
    <molecule id="Q8R179-1"/>
    <property type="organism name" value="mouse"/>
</dbReference>
<dbReference type="AGR" id="MGI:1914386"/>
<dbReference type="CTD" id="55709"/>
<dbReference type="MGI" id="MGI:1914386">
    <property type="gene designation" value="Kbtbd4"/>
</dbReference>
<dbReference type="VEuPathDB" id="HostDB:ENSMUSG00000005505"/>
<dbReference type="eggNOG" id="KOG4441">
    <property type="taxonomic scope" value="Eukaryota"/>
</dbReference>
<dbReference type="GeneTree" id="ENSGT00940000158775"/>
<dbReference type="HOGENOM" id="CLU_004253_14_6_1"/>
<dbReference type="InParanoid" id="Q8R179"/>
<dbReference type="OMA" id="CYVKPYV"/>
<dbReference type="OrthoDB" id="2311693at2759"/>
<dbReference type="PhylomeDB" id="Q8R179"/>
<dbReference type="TreeFam" id="TF330249"/>
<dbReference type="BioGRID-ORCS" id="67136">
    <property type="hits" value="3 hits in 77 CRISPR screens"/>
</dbReference>
<dbReference type="ChiTaRS" id="Kbtbd4">
    <property type="organism name" value="mouse"/>
</dbReference>
<dbReference type="PRO" id="PR:Q8R179"/>
<dbReference type="Proteomes" id="UP000000589">
    <property type="component" value="Chromosome 2"/>
</dbReference>
<dbReference type="RNAct" id="Q8R179">
    <property type="molecule type" value="protein"/>
</dbReference>
<dbReference type="Bgee" id="ENSMUSG00000005505">
    <property type="expression patterns" value="Expressed in cerebral cortex ventricular layer and 92 other cell types or tissues"/>
</dbReference>
<dbReference type="CDD" id="cd18481">
    <property type="entry name" value="BACK_KBTBD4"/>
    <property type="match status" value="1"/>
</dbReference>
<dbReference type="CDD" id="cd18272">
    <property type="entry name" value="BTB_POZ_KBTBD4"/>
    <property type="match status" value="1"/>
</dbReference>
<dbReference type="Gene3D" id="1.25.40.420">
    <property type="match status" value="1"/>
</dbReference>
<dbReference type="Gene3D" id="2.120.10.80">
    <property type="entry name" value="Kelch-type beta propeller"/>
    <property type="match status" value="1"/>
</dbReference>
<dbReference type="Gene3D" id="3.30.710.10">
    <property type="entry name" value="Potassium Channel Kv1.1, Chain A"/>
    <property type="match status" value="1"/>
</dbReference>
<dbReference type="InterPro" id="IPR011705">
    <property type="entry name" value="BACK"/>
</dbReference>
<dbReference type="InterPro" id="IPR017096">
    <property type="entry name" value="BTB-kelch_protein"/>
</dbReference>
<dbReference type="InterPro" id="IPR000210">
    <property type="entry name" value="BTB/POZ_dom"/>
</dbReference>
<dbReference type="InterPro" id="IPR042884">
    <property type="entry name" value="KBTBD4"/>
</dbReference>
<dbReference type="InterPro" id="IPR042950">
    <property type="entry name" value="KBTBD4_BACK"/>
</dbReference>
<dbReference type="InterPro" id="IPR042949">
    <property type="entry name" value="KBTBD4_BTB_POZ"/>
</dbReference>
<dbReference type="InterPro" id="IPR015915">
    <property type="entry name" value="Kelch-typ_b-propeller"/>
</dbReference>
<dbReference type="InterPro" id="IPR011498">
    <property type="entry name" value="Kelch_2"/>
</dbReference>
<dbReference type="InterPro" id="IPR011333">
    <property type="entry name" value="SKP1/BTB/POZ_sf"/>
</dbReference>
<dbReference type="PANTHER" id="PTHR47195">
    <property type="entry name" value="KELCH REPEAT AND BTB DOMAIN-CONTAINING PROTEIN 4"/>
    <property type="match status" value="1"/>
</dbReference>
<dbReference type="PANTHER" id="PTHR47195:SF1">
    <property type="entry name" value="KELCH REPEAT AND BTB DOMAIN-CONTAINING PROTEIN 4"/>
    <property type="match status" value="1"/>
</dbReference>
<dbReference type="Pfam" id="PF07707">
    <property type="entry name" value="BACK"/>
    <property type="match status" value="1"/>
</dbReference>
<dbReference type="Pfam" id="PF00651">
    <property type="entry name" value="BTB"/>
    <property type="match status" value="1"/>
</dbReference>
<dbReference type="Pfam" id="PF07646">
    <property type="entry name" value="Kelch_2"/>
    <property type="match status" value="1"/>
</dbReference>
<dbReference type="PIRSF" id="PIRSF037037">
    <property type="entry name" value="Kelch-like_protein_gigaxonin"/>
    <property type="match status" value="1"/>
</dbReference>
<dbReference type="SMART" id="SM00875">
    <property type="entry name" value="BACK"/>
    <property type="match status" value="1"/>
</dbReference>
<dbReference type="SMART" id="SM00225">
    <property type="entry name" value="BTB"/>
    <property type="match status" value="1"/>
</dbReference>
<dbReference type="SUPFAM" id="SSF117281">
    <property type="entry name" value="Kelch motif"/>
    <property type="match status" value="1"/>
</dbReference>
<dbReference type="SUPFAM" id="SSF54695">
    <property type="entry name" value="POZ domain"/>
    <property type="match status" value="1"/>
</dbReference>
<dbReference type="PROSITE" id="PS50097">
    <property type="entry name" value="BTB"/>
    <property type="match status" value="1"/>
</dbReference>
<sequence>MKGGIADSWQREKLATMESPEEPGASMDENYFVNYTFKDRSHSGRVAQGIMKLCLEEELFADVTISVEGREFQLHRLVLSAQSCFFRSMFTSNLKEAHNRVIVLQDVSESVFQLLVDYIYHGTVKLRADELQEIYEVSDMYQLTSLFEECSRFLARTVQVGNCLQVMWLADRHSDPELYTAAKHCAKTHLAQLQSTEEFLHLPHHLLTDIISDGVPCSQNPTEAIEAWINFNKEEREAFAESLRTSLKEIGENVHIYLIGKESSRTHSLAVSLHCAEDDSISVSGQNSLCHQITAACKHGGDLYVVGGSIPRRMWKCNNATVDWEWCAPLPRDRLQHTLVSVPGKDAIYSLGGKTLQDTLSNAVIYYRVGDNVWTETTQLEVAVSGAAGANLNGIIYLLGGEENDLDFFTKPSRLIQCFDTETDKCHVKPYVLPFAGRMHAAVHKDLVFIVAEGDSLVCYNPLLDSFTRLCLPEAWSSAPSLWKIASCNGSIYVFRDRYKKGDANTYKLDPATSAVTVTRGIKVLLTNLQFVLA</sequence>
<accession>Q8R179</accession>
<accession>A2AFW3</accession>
<accession>Q9CQX1</accession>
<organism>
    <name type="scientific">Mus musculus</name>
    <name type="common">Mouse</name>
    <dbReference type="NCBI Taxonomy" id="10090"/>
    <lineage>
        <taxon>Eukaryota</taxon>
        <taxon>Metazoa</taxon>
        <taxon>Chordata</taxon>
        <taxon>Craniata</taxon>
        <taxon>Vertebrata</taxon>
        <taxon>Euteleostomi</taxon>
        <taxon>Mammalia</taxon>
        <taxon>Eutheria</taxon>
        <taxon>Euarchontoglires</taxon>
        <taxon>Glires</taxon>
        <taxon>Rodentia</taxon>
        <taxon>Myomorpha</taxon>
        <taxon>Muroidea</taxon>
        <taxon>Muridae</taxon>
        <taxon>Murinae</taxon>
        <taxon>Mus</taxon>
        <taxon>Mus</taxon>
    </lineage>
</organism>
<gene>
    <name type="primary">Kbtbd4</name>
    <name type="synonym">Bklhd4</name>
</gene>
<protein>
    <recommendedName>
        <fullName>Kelch repeat and BTB domain-containing protein 4</fullName>
    </recommendedName>
    <alternativeName>
        <fullName>BTB and kelch domain-containing protein 4</fullName>
    </alternativeName>
</protein>
<proteinExistence type="evidence at transcript level"/>
<feature type="chain" id="PRO_0000119082" description="Kelch repeat and BTB domain-containing protein 4">
    <location>
        <begin position="1"/>
        <end position="534"/>
    </location>
</feature>
<feature type="domain" description="BTB" evidence="3">
    <location>
        <begin position="61"/>
        <end position="128"/>
    </location>
</feature>
<feature type="domain" description="BACK">
    <location>
        <begin position="163"/>
        <end position="255"/>
    </location>
</feature>
<feature type="repeat" description="Kelch 1" evidence="2">
    <location>
        <begin position="255"/>
        <end position="301"/>
    </location>
</feature>
<feature type="repeat" description="Kelch 2" evidence="2">
    <location>
        <begin position="302"/>
        <end position="344"/>
    </location>
</feature>
<feature type="repeat" description="Kelch 3" evidence="2">
    <location>
        <begin position="347"/>
        <end position="394"/>
    </location>
</feature>
<feature type="repeat" description="Kelch 4" evidence="2">
    <location>
        <begin position="396"/>
        <end position="446"/>
    </location>
</feature>
<feature type="repeat" description="Kelch 5" evidence="2">
    <location>
        <begin position="448"/>
        <end position="497"/>
    </location>
</feature>
<feature type="splice variant" id="VSP_010221" description="In isoform 2." evidence="4">
    <location>
        <begin position="1"/>
        <end position="16"/>
    </location>
</feature>
<name>KBTB4_MOUSE</name>
<evidence type="ECO:0000250" key="1">
    <source>
        <dbReference type="UniProtKB" id="Q9NVX7"/>
    </source>
</evidence>
<evidence type="ECO:0000255" key="2"/>
<evidence type="ECO:0000255" key="3">
    <source>
        <dbReference type="PROSITE-ProRule" id="PRU00037"/>
    </source>
</evidence>
<evidence type="ECO:0000303" key="4">
    <source>
    </source>
</evidence>
<keyword id="KW-0025">Alternative splicing</keyword>
<keyword id="KW-0880">Kelch repeat</keyword>
<keyword id="KW-1185">Reference proteome</keyword>
<keyword id="KW-0677">Repeat</keyword>
<comment type="function">
    <text evidence="1">Substrate-specific adapter of a BCR (BTB-CUL3-RBX1) E3 ubiquitin ligase complex which targets CoREST corepressor complex components RCOR1, KDM1A/LSD1 and HDAC2 for proteasomal degradation. RCOR1 is likely to be the primary target while degradation of KDM1A and HDAC2 is likely due to their association with RCOR1. Also targets RCOR3, MIER2 and MIER3 for proteasomal degradation as well as associated proteins ZNF217 and RREB1. Degradation is dependent on the presence of an ELM2 domain in the target proteins.</text>
</comment>
<comment type="subunit">
    <text evidence="1">Component of the BCR(KBTBD4) E3 ubiquitin ligase complex, at least composed of CUL3, KBTBD4 and RBX1.</text>
</comment>
<comment type="alternative products">
    <event type="alternative splicing"/>
    <isoform>
        <id>Q8R179-1</id>
        <name>1</name>
        <sequence type="displayed"/>
    </isoform>
    <isoform>
        <id>Q8R179-2</id>
        <name>2</name>
        <sequence type="described" ref="VSP_010221"/>
    </isoform>
</comment>